<name>STRA6_MOUSE</name>
<keyword id="KW-1003">Cell membrane</keyword>
<keyword id="KW-0325">Glycoprotein</keyword>
<keyword id="KW-0472">Membrane</keyword>
<keyword id="KW-0597">Phosphoprotein</keyword>
<keyword id="KW-0675">Receptor</keyword>
<keyword id="KW-1185">Reference proteome</keyword>
<keyword id="KW-0683">Retinol-binding</keyword>
<keyword id="KW-0812">Transmembrane</keyword>
<keyword id="KW-1133">Transmembrane helix</keyword>
<keyword id="KW-0813">Transport</keyword>
<keyword id="KW-0845">Vitamin A</keyword>
<feature type="chain" id="PRO_0000311229" description="Receptor for retinol uptake STRA6">
    <location>
        <begin position="1"/>
        <end position="670"/>
    </location>
</feature>
<feature type="topological domain" description="Extracellular" evidence="1">
    <location>
        <begin position="1"/>
        <end position="50"/>
    </location>
</feature>
<feature type="transmembrane region" description="Helical" evidence="1">
    <location>
        <begin position="51"/>
        <end position="71"/>
    </location>
</feature>
<feature type="topological domain" description="Cytoplasmic" evidence="1">
    <location>
        <begin position="72"/>
        <end position="97"/>
    </location>
</feature>
<feature type="transmembrane region" description="Helical" evidence="1">
    <location>
        <begin position="98"/>
        <end position="118"/>
    </location>
</feature>
<feature type="topological domain" description="Extracellular" evidence="1">
    <location>
        <begin position="119"/>
        <end position="144"/>
    </location>
</feature>
<feature type="transmembrane region" description="Helical" evidence="1">
    <location>
        <begin position="145"/>
        <end position="165"/>
    </location>
</feature>
<feature type="topological domain" description="Cytoplasmic" evidence="1">
    <location>
        <begin position="166"/>
        <end position="168"/>
    </location>
</feature>
<feature type="transmembrane region" description="Helical" evidence="1">
    <location>
        <begin position="169"/>
        <end position="189"/>
    </location>
</feature>
<feature type="topological domain" description="Extracellular" evidence="1">
    <location>
        <begin position="190"/>
        <end position="205"/>
    </location>
</feature>
<feature type="transmembrane region" description="Helical" evidence="1">
    <location>
        <begin position="206"/>
        <end position="226"/>
    </location>
</feature>
<feature type="topological domain" description="Cytoplasmic" evidence="1">
    <location>
        <begin position="227"/>
        <end position="296"/>
    </location>
</feature>
<feature type="transmembrane region" description="Helical" evidence="1">
    <location>
        <begin position="297"/>
        <end position="317"/>
    </location>
</feature>
<feature type="topological domain" description="Extracellular" evidence="1">
    <location>
        <begin position="318"/>
        <end position="368"/>
    </location>
</feature>
<feature type="transmembrane region" description="Helical" evidence="1">
    <location>
        <begin position="369"/>
        <end position="389"/>
    </location>
</feature>
<feature type="topological domain" description="Cytoplasmic" evidence="1">
    <location>
        <begin position="390"/>
        <end position="423"/>
    </location>
</feature>
<feature type="transmembrane region" description="Helical" evidence="1">
    <location>
        <begin position="424"/>
        <end position="444"/>
    </location>
</feature>
<feature type="topological domain" description="Extracellular" evidence="1">
    <location>
        <begin position="445"/>
        <end position="474"/>
    </location>
</feature>
<feature type="transmembrane region" description="Helical" evidence="1">
    <location>
        <begin position="475"/>
        <end position="495"/>
    </location>
</feature>
<feature type="topological domain" description="Cytoplasmic" evidence="1">
    <location>
        <begin position="496"/>
        <end position="510"/>
    </location>
</feature>
<feature type="intramembrane region" description="Helical" evidence="1">
    <location>
        <begin position="511"/>
        <end position="548"/>
    </location>
</feature>
<feature type="topological domain" description="Cytoplasmic" evidence="1">
    <location>
        <begin position="549"/>
        <end position="670"/>
    </location>
</feature>
<feature type="region of interest" description="Interaction with RBP1" evidence="3">
    <location>
        <begin position="235"/>
        <end position="294"/>
    </location>
</feature>
<feature type="modified residue" description="Phosphotyrosine" evidence="3">
    <location>
        <position position="644"/>
    </location>
</feature>
<feature type="glycosylation site" description="N-linked (GlcNAc...) asparagine" evidence="4">
    <location>
        <position position="8"/>
    </location>
</feature>
<feature type="glycosylation site" description="N-linked (GlcNAc...) asparagine" evidence="4">
    <location>
        <position position="128"/>
    </location>
</feature>
<feature type="sequence conflict" description="In Ref. 2; AAH75657." evidence="16" ref="2">
    <original>R</original>
    <variation>P</variation>
    <location>
        <position position="234"/>
    </location>
</feature>
<reference key="1">
    <citation type="journal article" date="1997" name="Mech. Dev.">
        <title>Developmental expression pattern of Stra6, a retinoic acid-responsive gene encoding a new type of membrane protein.</title>
        <authorList>
            <person name="Bouillet P."/>
            <person name="Sapin V."/>
            <person name="Chazaud C."/>
            <person name="Messaddeq N."/>
            <person name="Decimo D."/>
            <person name="Dolle P."/>
            <person name="Chambon P."/>
        </authorList>
    </citation>
    <scope>NUCLEOTIDE SEQUENCE [MRNA]</scope>
    <scope>SUBCELLULAR LOCATION</scope>
    <scope>TISSUE SPECIFICITY</scope>
    <scope>DEVELOPMENTAL STAGE</scope>
    <scope>INDUCTION</scope>
</reference>
<reference key="2">
    <citation type="journal article" date="2004" name="Genome Res.">
        <title>The status, quality, and expansion of the NIH full-length cDNA project: the Mammalian Gene Collection (MGC).</title>
        <authorList>
            <consortium name="The MGC Project Team"/>
        </authorList>
    </citation>
    <scope>NUCLEOTIDE SEQUENCE [LARGE SCALE MRNA]</scope>
    <source>
        <strain>C57BL/6J</strain>
        <tissue>Eye</tissue>
    </source>
</reference>
<reference key="3">
    <citation type="journal article" date="1995" name="Proc. Natl. Acad. Sci. U.S.A.">
        <title>Reexpression of retinoic acid receptor (RAR) gamma or overexpression of RAR alpha or RAR beta in RAR gamma-null F9 cells reveals a partial functional redundancy between the three RAR types.</title>
        <authorList>
            <person name="Taneja R."/>
            <person name="Bouillet P."/>
            <person name="Boylan J.F."/>
            <person name="Gaub M.-P."/>
            <person name="Roy B."/>
            <person name="Gudas L.J."/>
            <person name="Chambon P."/>
        </authorList>
    </citation>
    <scope>INDUCTION</scope>
</reference>
<reference key="4">
    <citation type="journal article" date="1996" name="Dev. Genet.">
        <title>Restricted expression of a novel retinoic acid responsive gene during limb bud dorsoventral patterning and endochondral ossification.</title>
        <authorList>
            <person name="Chazaud C."/>
            <person name="Bouillet P."/>
            <person name="Oulad-Abdelghani M."/>
            <person name="Dolle P."/>
        </authorList>
    </citation>
    <scope>DEVELOPMENTAL STAGE</scope>
</reference>
<reference key="5">
    <citation type="journal article" date="2000" name="Mech. Dev.">
        <title>Differential expression of retinoic acid-inducible (Stra) genes during mouse placentation.</title>
        <authorList>
            <person name="Sapin V."/>
            <person name="Bouillet P."/>
            <person name="Oulad-Abdelghani M."/>
            <person name="Dastugue B."/>
            <person name="Chambon P."/>
            <person name="Dolle P."/>
        </authorList>
    </citation>
    <scope>DEVELOPMENTAL STAGE</scope>
</reference>
<reference key="6">
    <citation type="journal article" date="2001" name="Cancer Res.">
        <title>Overexpression of the retinoic acid-responsive gene Stra6 in human cancers and its synergistic induction by Wnt-1 and retinoic acid.</title>
        <authorList>
            <person name="Szeto W."/>
            <person name="Jiang W."/>
            <person name="Tice D.A."/>
            <person name="Rubinfeld B."/>
            <person name="Hollingshead P.G."/>
            <person name="Fong S.E."/>
            <person name="Dugger D.L."/>
            <person name="Pham T."/>
            <person name="Yansura D.G."/>
            <person name="Wong T.A."/>
            <person name="Grimaldi J.C."/>
            <person name="Corpuz R.T."/>
            <person name="Singh J.S."/>
            <person name="Frantz G.D."/>
            <person name="Devaux B."/>
            <person name="Crowley C.W."/>
            <person name="Schwall R.H."/>
            <person name="Eberhard D.A."/>
            <person name="Rastelli L."/>
            <person name="Polakis P."/>
            <person name="Pennica D."/>
        </authorList>
    </citation>
    <scope>INDUCTION</scope>
</reference>
<reference key="7">
    <citation type="journal article" date="2002" name="J. Biol. Chem.">
        <title>Synergistic induction of tumor antigens by Wnt-1 signaling and retinoic acid revealed by gene expression profiling.</title>
        <authorList>
            <person name="Tice D.A."/>
            <person name="Szeto W."/>
            <person name="Soloviev I."/>
            <person name="Rubinfeld B."/>
            <person name="Fong S.E."/>
            <person name="Dugger D.L."/>
            <person name="Winer J."/>
            <person name="Williams P.M."/>
            <person name="Wieand D."/>
            <person name="Smith V."/>
            <person name="Schwall R.H."/>
            <person name="Pennica D."/>
            <person name="Polakis P."/>
        </authorList>
    </citation>
    <scope>INDUCTION</scope>
</reference>
<reference key="8">
    <citation type="journal article" date="2011" name="Proc. Natl. Acad. Sci. U.S.A.">
        <title>Signaling by vitamin A and retinol-binding protein regulates gene expression to inhibit insulin responses.</title>
        <authorList>
            <person name="Berry D.C."/>
            <person name="Jin H."/>
            <person name="Majumdar A."/>
            <person name="Noy N."/>
        </authorList>
    </citation>
    <scope>FUNCTION</scope>
    <scope>PHOSPHORYLATION</scope>
    <scope>TISSUE SPECIFICITY</scope>
</reference>
<reference key="9">
    <citation type="journal article" date="2012" name="Invest. Ophthalmol. Vis. Sci.">
        <title>Retinoid content, visual responses, and ocular morphology are compromised in the retinas of mice lacking the retinol-binding protein receptor, STRA6.</title>
        <authorList>
            <person name="Ruiz A."/>
            <person name="Mark M."/>
            <person name="Jacobs H."/>
            <person name="Klopfenstein M."/>
            <person name="Hu J."/>
            <person name="Lloyd M."/>
            <person name="Habib S."/>
            <person name="Tosha C."/>
            <person name="Radu R.A."/>
            <person name="Ghyselinck N.B."/>
            <person name="Nusinowitz S."/>
            <person name="Bok D."/>
        </authorList>
    </citation>
    <scope>DISRUPTION PHENOTYPE</scope>
    <scope>FUNCTION</scope>
    <scope>SUBCELLULAR LOCATION</scope>
    <scope>TISSUE SPECIFICITY</scope>
</reference>
<reference key="10">
    <citation type="journal article" date="2013" name="J. Biol. Chem.">
        <title>The STRA6 receptor is essential for retinol-binding protein-induced insulin resistance but not for maintaining vitamin A homeostasis in tissues other than the eye.</title>
        <authorList>
            <person name="Berry D.C."/>
            <person name="Jacobs H."/>
            <person name="Marwarha G."/>
            <person name="Gely-Pernot A."/>
            <person name="O'Byrne S.M."/>
            <person name="DeSantis D."/>
            <person name="Klopfenstein M."/>
            <person name="Feret B."/>
            <person name="Dennefeld C."/>
            <person name="Blaner W.S."/>
            <person name="Croniger C.M."/>
            <person name="Mark M."/>
            <person name="Noy N."/>
            <person name="Ghyselinck N.B."/>
        </authorList>
    </citation>
    <scope>FUNCTION</scope>
    <scope>DISRUPTION PHENOTYPE</scope>
    <scope>TISSUE SPECIFICITY</scope>
</reference>
<reference key="11">
    <citation type="journal article" date="2014" name="Hum. Mol. Genet.">
        <title>STRA6 is critical for cellular vitamin A uptake and homeostasis.</title>
        <authorList>
            <person name="Amengual J."/>
            <person name="Zhang N."/>
            <person name="Kemerer M."/>
            <person name="Maeda T."/>
            <person name="Palczewski K."/>
            <person name="Von Lintig J."/>
        </authorList>
    </citation>
    <scope>FUNCTION</scope>
    <scope>DISRUPTION PHENOTYPE</scope>
    <scope>SUBCELLULAR LOCATION</scope>
    <scope>TISSUE SPECIFICITY</scope>
</reference>
<proteinExistence type="evidence at protein level"/>
<dbReference type="EMBL" id="AF062476">
    <property type="protein sequence ID" value="AAC16016.1"/>
    <property type="molecule type" value="mRNA"/>
</dbReference>
<dbReference type="EMBL" id="BC075657">
    <property type="protein sequence ID" value="AAH75657.1"/>
    <property type="molecule type" value="mRNA"/>
</dbReference>
<dbReference type="CCDS" id="CCDS23236.1"/>
<dbReference type="RefSeq" id="NP_001155947.1">
    <property type="nucleotide sequence ID" value="NM_001162475.1"/>
</dbReference>
<dbReference type="RefSeq" id="NP_001155948.1">
    <property type="nucleotide sequence ID" value="NM_001162476.1"/>
</dbReference>
<dbReference type="RefSeq" id="NP_001155951.1">
    <property type="nucleotide sequence ID" value="NM_001162479.1"/>
</dbReference>
<dbReference type="RefSeq" id="NP_033317.2">
    <property type="nucleotide sequence ID" value="NM_009291.2"/>
</dbReference>
<dbReference type="RefSeq" id="XP_006511004.2">
    <property type="nucleotide sequence ID" value="XM_006510941.3"/>
</dbReference>
<dbReference type="RefSeq" id="XP_006511006.1">
    <property type="nucleotide sequence ID" value="XM_006510943.3"/>
</dbReference>
<dbReference type="RefSeq" id="XP_006511007.1">
    <property type="nucleotide sequence ID" value="XM_006510944.3"/>
</dbReference>
<dbReference type="RefSeq" id="XP_006511008.1">
    <property type="nucleotide sequence ID" value="XM_006510945.3"/>
</dbReference>
<dbReference type="RefSeq" id="XP_006511009.1">
    <property type="nucleotide sequence ID" value="XM_006510946.3"/>
</dbReference>
<dbReference type="SMR" id="O70491"/>
<dbReference type="FunCoup" id="O70491">
    <property type="interactions" value="69"/>
</dbReference>
<dbReference type="STRING" id="10090.ENSMUSP00000130232"/>
<dbReference type="TCDB" id="2.A.90.1.2">
    <property type="family name" value="the vitamin a receptor/transporter (stra6) family"/>
</dbReference>
<dbReference type="GlyCosmos" id="O70491">
    <property type="glycosylation" value="2 sites, No reported glycans"/>
</dbReference>
<dbReference type="GlyGen" id="O70491">
    <property type="glycosylation" value="2 sites"/>
</dbReference>
<dbReference type="iPTMnet" id="O70491"/>
<dbReference type="PhosphoSitePlus" id="O70491"/>
<dbReference type="PaxDb" id="10090-ENSMUSP00000034880"/>
<dbReference type="PeptideAtlas" id="O70491"/>
<dbReference type="ProteomicsDB" id="258664"/>
<dbReference type="DNASU" id="20897"/>
<dbReference type="GeneID" id="20897"/>
<dbReference type="KEGG" id="mmu:20897"/>
<dbReference type="UCSC" id="uc009pwi.2">
    <property type="organism name" value="mouse"/>
</dbReference>
<dbReference type="AGR" id="MGI:107742"/>
<dbReference type="CTD" id="64220"/>
<dbReference type="MGI" id="MGI:107742">
    <property type="gene designation" value="Stra6"/>
</dbReference>
<dbReference type="eggNOG" id="ENOG502QRSS">
    <property type="taxonomic scope" value="Eukaryota"/>
</dbReference>
<dbReference type="InParanoid" id="O70491"/>
<dbReference type="OrthoDB" id="9939815at2759"/>
<dbReference type="PhylomeDB" id="O70491"/>
<dbReference type="TreeFam" id="TF331851"/>
<dbReference type="Reactome" id="R-MMU-2453902">
    <property type="pathway name" value="The canonical retinoid cycle in rods (twilight vision)"/>
</dbReference>
<dbReference type="BioGRID-ORCS" id="20897">
    <property type="hits" value="7 hits in 78 CRISPR screens"/>
</dbReference>
<dbReference type="ChiTaRS" id="Stra6">
    <property type="organism name" value="mouse"/>
</dbReference>
<dbReference type="PRO" id="PR:O70491"/>
<dbReference type="Proteomes" id="UP000000589">
    <property type="component" value="Unplaced"/>
</dbReference>
<dbReference type="RNAct" id="O70491">
    <property type="molecule type" value="protein"/>
</dbReference>
<dbReference type="GO" id="GO:0005886">
    <property type="term" value="C:plasma membrane"/>
    <property type="evidence" value="ECO:0000314"/>
    <property type="project" value="MGI"/>
</dbReference>
<dbReference type="GO" id="GO:0016918">
    <property type="term" value="F:retinal binding"/>
    <property type="evidence" value="ECO:0007669"/>
    <property type="project" value="UniProtKB-KW"/>
</dbReference>
<dbReference type="GO" id="GO:0019841">
    <property type="term" value="F:retinol binding"/>
    <property type="evidence" value="ECO:0007669"/>
    <property type="project" value="UniProtKB-KW"/>
</dbReference>
<dbReference type="GO" id="GO:0034632">
    <property type="term" value="F:retinol transmembrane transporter activity"/>
    <property type="evidence" value="ECO:0000250"/>
    <property type="project" value="UniProtKB"/>
</dbReference>
<dbReference type="GO" id="GO:0038023">
    <property type="term" value="F:signaling receptor activity"/>
    <property type="evidence" value="ECO:0007669"/>
    <property type="project" value="InterPro"/>
</dbReference>
<dbReference type="GO" id="GO:0043010">
    <property type="term" value="P:camera-type eye development"/>
    <property type="evidence" value="ECO:0000250"/>
    <property type="project" value="UniProtKB"/>
</dbReference>
<dbReference type="GO" id="GO:0051649">
    <property type="term" value="P:establishment of localization in cell"/>
    <property type="evidence" value="ECO:0000315"/>
    <property type="project" value="MGI"/>
</dbReference>
<dbReference type="GO" id="GO:0046427">
    <property type="term" value="P:positive regulation of receptor signaling pathway via JAK-STAT"/>
    <property type="evidence" value="ECO:0000315"/>
    <property type="project" value="MGI"/>
</dbReference>
<dbReference type="GO" id="GO:0034633">
    <property type="term" value="P:retinol transport"/>
    <property type="evidence" value="ECO:0000315"/>
    <property type="project" value="MGI"/>
</dbReference>
<dbReference type="InterPro" id="IPR026612">
    <property type="entry name" value="STRA6-like"/>
</dbReference>
<dbReference type="PANTHER" id="PTHR21444">
    <property type="entry name" value="COILED-COIL DOMAIN-CONTAINING PROTEIN 180"/>
    <property type="match status" value="1"/>
</dbReference>
<dbReference type="PANTHER" id="PTHR21444:SF16">
    <property type="entry name" value="RECEPTOR FOR RETINOL UPTAKE STRA6"/>
    <property type="match status" value="1"/>
</dbReference>
<dbReference type="Pfam" id="PF14752">
    <property type="entry name" value="RBP_receptor"/>
    <property type="match status" value="1"/>
</dbReference>
<organism>
    <name type="scientific">Mus musculus</name>
    <name type="common">Mouse</name>
    <dbReference type="NCBI Taxonomy" id="10090"/>
    <lineage>
        <taxon>Eukaryota</taxon>
        <taxon>Metazoa</taxon>
        <taxon>Chordata</taxon>
        <taxon>Craniata</taxon>
        <taxon>Vertebrata</taxon>
        <taxon>Euteleostomi</taxon>
        <taxon>Mammalia</taxon>
        <taxon>Eutheria</taxon>
        <taxon>Euarchontoglires</taxon>
        <taxon>Glires</taxon>
        <taxon>Rodentia</taxon>
        <taxon>Myomorpha</taxon>
        <taxon>Muroidea</taxon>
        <taxon>Muridae</taxon>
        <taxon>Murinae</taxon>
        <taxon>Mus</taxon>
        <taxon>Mus</taxon>
    </lineage>
</organism>
<accession>O70491</accession>
<accession>Q6DIA8</accession>
<protein>
    <recommendedName>
        <fullName>Receptor for retinol uptake STRA6</fullName>
    </recommendedName>
    <alternativeName>
        <fullName>Retinoic acid-responsive protein</fullName>
    </alternativeName>
    <alternativeName>
        <fullName>Retinol-binding protein receptor STRA6</fullName>
    </alternativeName>
    <alternativeName>
        <fullName evidence="15">Stimulated by retinoic acid gene 6 protein</fullName>
    </alternativeName>
</protein>
<sequence>MESQASENGSQTSSGVTDDYSSWYIEEPLGAEEVQPEGVIPLCQLTAPPALLHACLASLSFLVLLLLALLVRRRRLWPRCGHRGLGLPSPVDFLAGDLSWTVPAAVFVVLFSNLCLLLPDENPLPFLNLTAASSPDGEMETSRGPWKLLALLYYPALYYPLAACASAGHQAAFLLGTVLSWAHFGVQVWQKAECPQDPKIYKHYSLLASLPLLLGLGFLSLWYPVQLVQSLRHRTGAGSQGLQTSYSEKYLRTLLCPKKLDSCSHPASKRSLLSRAWAFSHHSIYTPQPGFRLPLKLVISATLTGTATYQVALLLLVSVVPTVQKVRAGINTDVSYLLAGFGIVLSEDRQEVVELVKHHLWTVEACYISALVLSCASTFLLLIRSLRTHRANLQALHRGAALDLDPPLQSIHPSRQAIVSWMSFCAYQTAFSCLGLLVQQVIFFLGTTSLAFLVFVPLLHGRNLLLLRSLESTWPFWLTVALAVILQNIAANWIFLRTHHGYPELTNRRMLCVATFLLFPINMLVGAIMAVWRVLISSLYNTVHLGQMDLSLLPQRAASLDPGYHTYQNFLRIEASQSHPGVIAFCALLLHAPSPQPRPPLAPQDSLRPAEEEEGMQLLQTKDLMAKGAGHKGSQSRARWGLAYTLLHNPSLQAFRKAALTSAKANGTQP</sequence>
<comment type="function">
    <text evidence="3 8 9 10 11">Functions as a retinol transporter (PubMed:23839944, PubMed:24852372). Accepts all-trans retinol from the extracellular retinol-binding protein RBP4, facilitates retinol transport across the cell membrane, and then transfers retinol to the cytoplasmic retinol-binding protein RBP1. Retinol uptake is enhanced by LRAT, an enzyme that converts retinol to all-trans retinyl esters, the storage forms of vitamin A (By similarity). Contributes to the activation of a signaling cascade that depends on retinol transport and LRAT-dependent generation of retinol metabolites that then trigger activation of JAK2 and its target STAT5, and ultimately increase the expression of SOCS3 and inhibit cellular responses to insulin (PubMed:21368206, PubMed:23839944). Important for the homeostasis of vitamin A and its derivatives, such as retinoic acid and 11-cis-retinal (PubMed:22467576, PubMed:24852372). STRA6-mediated transport is particularly important in the eye, and under conditions of dietary vitamin A deficiency (PubMed:22467576, PubMed:23839944, PubMed:24852372). Does not transport retinoic acid (By similarity).</text>
</comment>
<comment type="subunit">
    <text evidence="1 3">Homodimer (By similarity). Interacts with JAK2 and STAT5. Interacts (via extracellular domains) with RBP4. Interacts (via cytoplasmic domains) with RBP1 (By similarity).</text>
</comment>
<comment type="subcellular location">
    <subcellularLocation>
        <location evidence="14">Cell membrane</location>
        <topology evidence="2">Multi-pass membrane protein</topology>
    </subcellularLocation>
    <text evidence="2 9 14">In the retinal pigment epithelium localizes to the basolateral membrane (PubMed:22467576, PubMed:24852372). Plasma membrane of the basal pole of Sertoli cells, absent in plasma membrane of neighboring spermatogonia (PubMed:9203140).</text>
</comment>
<comment type="tissue specificity">
    <text evidence="8 9 10 11 14">Widely expressed in the embryo (PubMed:23839944, PubMed:9203140). Detected in adult in the retinal pigment epithelium in the eye (PubMed:22467576, PubMed:23839944, PubMed:24852372, PubMed:9203140). In the adult, is highly expressed in cells that compose blood-organ barriers in the brain (choroid plexus and the brain microvascular), in testis (the basal layer of the seminiferous epithelium), in the yolk sac, and in the chorioallantoic placenta (PubMed:23839944, PubMed:9203140). Detected in white adipose tissue and skeletal muscle, but not in liver (at protein level) (PubMed:21368206). Widely expressed in adult, with high expression levels in the eye (PubMed:24852372). Detected in brain, cerebellum, testis, pituitary, pancreas, kidney, spleen, and female genital tract; and at very low levels in heart and lung (PubMed:24852372, PubMed:9203140). Not detected in liver (PubMed:9203140).</text>
</comment>
<comment type="developmental stage">
    <text evidence="5 13 14">During embryogenesis, strongly expressed in the periocular mesenchyme, in the developing eyes, in respiratory mesenchymes, and in respiratory and bronchial epithelium, as well as in the developing central nervous system and in different embryonic gut derivatives (the epithelium of the pharyngeal pouches, mesenchyme of the esophagus, stomach, intestine, and rectum). In Sertoli cells expression depends on the stage of the spermatogenic cycle. During early placentation, is expressed in the yolk sac membrane and the chorionic plate. Expression was no longer detected in the yolk sac membrane during mid-late gestation, but was found in the labyrinthine zone of the chorioallantoic placenta. Expressed during early dorsoventral limb patterning and during endochondral ossification.</text>
</comment>
<comment type="induction">
    <text evidence="6 7 12 14">By retinoic acid. Synergistically up-regulated by Wnt1 and retinoids in mammary epithelial cells.</text>
</comment>
<comment type="domain">
    <text evidence="1 2">Contrary to predictions, contains nine transmembrane helices, with an extracellular N-terminus and a cytoplasmic C-terminus (By similarity). Besides, contains one long helix that dips into the membrane and then runs more or less parallel to the membrane surface (By similarity).</text>
</comment>
<comment type="PTM">
    <text evidence="3 8">Phosphorylated on tyrosine residues in response to RBP4 binding (PubMed:21368206). Phosphorylation requires the presence of LRAT, suggesting it may be triggered by the uptake of retinol that is then metabolized within the cell to retinoids that function as signaling molecules (By similarity).</text>
</comment>
<comment type="disruption phenotype">
    <text evidence="9 10 11">No visible phenotype at birth (PubMed:22467576, PubMed:23839944, PubMed:24852372). Measurement of the eye diameter indicates a tendency towards slightly smaller eye diameter 6 weeks after birth, and this difference persists in 5 and 10 month old animals (PubMed:22467576). The retina inner and outer segments are shorter in mutant mice (PubMed:22467576, PubMed:24852372). The number of cone cells in the retina is reduced, giving rise to a reduced cone response to light stimulation (PubMed:22467576). The retinal pigment epithelium displays discolored regions, where cells have large vacuoles and a reduced melanin content (PubMed:24852372). Retina and retinal pigment epithelium from dark-adapted mutant mice display strongly reduced levels of all-trans-retinol, all-trans-retinyl palmitate, 11-cis-retinal, 11-cis-retinyl palmitate and all-trans-retinal (PubMed:22467576, PubMed:24852372). Electroretinograms (ERG) of dark-adapted retinas from mutant mice display reduced a- and b-wave amplitude in response to light (PubMed:22467576). In another knockout model, the electroretinogram shows a complete lack of response to light (PubMed:24852372). Dietary vitamin A supplements can alleviate the ocular retinoid deficiency, and can prevent the altered retinal responses to light observed in mutant mice (PubMed:24852372). Other tissues and organs (brain, heart, kidney, liver, lungs, muscle, pancreas, spleen, testis and white adipose tissue) display grossly normal retinoid levels in 12 week old mice kept on normal chow (PubMed:23839944). Embryonic development appears grossly normal, also when females are fed a vitamin A-deficient diet (PubMed:23839944). Embryonic eye development is altered, leading to persistent hyperplastic primary vitreous that forms a conical mass of cells between the optic nerve exit point and the lens in the eyes of mutant mice (PubMed:22467576). In contrast, persistent hyperplastic primary vitreous was not observed in another knockout experiment (PubMed:24852372).</text>
</comment>
<comment type="miscellaneous">
    <text>The retinoic acid-induced activation is impaired in retinoic acid receptor gamma-null F9 cells.</text>
</comment>
<evidence type="ECO:0000250" key="1">
    <source>
        <dbReference type="UniProtKB" id="F1RAX4"/>
    </source>
</evidence>
<evidence type="ECO:0000250" key="2">
    <source>
        <dbReference type="UniProtKB" id="Q0V8E7"/>
    </source>
</evidence>
<evidence type="ECO:0000250" key="3">
    <source>
        <dbReference type="UniProtKB" id="Q9BX79"/>
    </source>
</evidence>
<evidence type="ECO:0000255" key="4"/>
<evidence type="ECO:0000269" key="5">
    <source>
    </source>
</evidence>
<evidence type="ECO:0000269" key="6">
    <source>
    </source>
</evidence>
<evidence type="ECO:0000269" key="7">
    <source>
    </source>
</evidence>
<evidence type="ECO:0000269" key="8">
    <source>
    </source>
</evidence>
<evidence type="ECO:0000269" key="9">
    <source>
    </source>
</evidence>
<evidence type="ECO:0000269" key="10">
    <source>
    </source>
</evidence>
<evidence type="ECO:0000269" key="11">
    <source>
    </source>
</evidence>
<evidence type="ECO:0000269" key="12">
    <source>
    </source>
</evidence>
<evidence type="ECO:0000269" key="13">
    <source>
    </source>
</evidence>
<evidence type="ECO:0000269" key="14">
    <source>
    </source>
</evidence>
<evidence type="ECO:0000303" key="15">
    <source>
    </source>
</evidence>
<evidence type="ECO:0000305" key="16"/>
<gene>
    <name type="primary">Stra6</name>
</gene>